<evidence type="ECO:0000255" key="1">
    <source>
        <dbReference type="HAMAP-Rule" id="MF_01217"/>
    </source>
</evidence>
<evidence type="ECO:0000255" key="2">
    <source>
        <dbReference type="PROSITE-ProRule" id="PRU00258"/>
    </source>
</evidence>
<sequence length="77" mass="8549">MENFDKVKDIIVDRLGVDADKVTEDASFKDDLGADSLDIAELVMELEDEFGTEIPDEEAEKINTVGDAVKFINSLEK</sequence>
<accession>A5ISB7</accession>
<feature type="chain" id="PRO_1000085614" description="Acyl carrier protein">
    <location>
        <begin position="1"/>
        <end position="77"/>
    </location>
</feature>
<feature type="domain" description="Carrier" evidence="2">
    <location>
        <begin position="1"/>
        <end position="76"/>
    </location>
</feature>
<feature type="modified residue" description="O-(pantetheine 4'-phosphoryl)serine" evidence="2">
    <location>
        <position position="36"/>
    </location>
</feature>
<reference key="1">
    <citation type="submission" date="2007-05" db="EMBL/GenBank/DDBJ databases">
        <title>Complete sequence of chromosome of Staphylococcus aureus subsp. aureus JH9.</title>
        <authorList>
            <consortium name="US DOE Joint Genome Institute"/>
            <person name="Copeland A."/>
            <person name="Lucas S."/>
            <person name="Lapidus A."/>
            <person name="Barry K."/>
            <person name="Detter J.C."/>
            <person name="Glavina del Rio T."/>
            <person name="Hammon N."/>
            <person name="Israni S."/>
            <person name="Pitluck S."/>
            <person name="Chain P."/>
            <person name="Malfatti S."/>
            <person name="Shin M."/>
            <person name="Vergez L."/>
            <person name="Schmutz J."/>
            <person name="Larimer F."/>
            <person name="Land M."/>
            <person name="Hauser L."/>
            <person name="Kyrpides N."/>
            <person name="Kim E."/>
            <person name="Tomasz A."/>
            <person name="Richardson P."/>
        </authorList>
    </citation>
    <scope>NUCLEOTIDE SEQUENCE [LARGE SCALE GENOMIC DNA]</scope>
    <source>
        <strain>JH9</strain>
    </source>
</reference>
<name>ACP_STAA9</name>
<protein>
    <recommendedName>
        <fullName evidence="1">Acyl carrier protein</fullName>
        <shortName evidence="1">ACP</shortName>
    </recommendedName>
</protein>
<keyword id="KW-0963">Cytoplasm</keyword>
<keyword id="KW-0275">Fatty acid biosynthesis</keyword>
<keyword id="KW-0276">Fatty acid metabolism</keyword>
<keyword id="KW-0444">Lipid biosynthesis</keyword>
<keyword id="KW-0443">Lipid metabolism</keyword>
<keyword id="KW-0596">Phosphopantetheine</keyword>
<keyword id="KW-0597">Phosphoprotein</keyword>
<comment type="function">
    <text evidence="1">Carrier of the growing fatty acid chain in fatty acid biosynthesis.</text>
</comment>
<comment type="pathway">
    <text evidence="1">Lipid metabolism; fatty acid biosynthesis.</text>
</comment>
<comment type="subcellular location">
    <subcellularLocation>
        <location evidence="1">Cytoplasm</location>
    </subcellularLocation>
</comment>
<comment type="PTM">
    <text evidence="1">4'-phosphopantetheine is transferred from CoA to a specific serine of apo-ACP by AcpS. This modification is essential for activity because fatty acids are bound in thioester linkage to the sulfhydryl of the prosthetic group.</text>
</comment>
<comment type="similarity">
    <text evidence="1">Belongs to the acyl carrier protein (ACP) family.</text>
</comment>
<organism>
    <name type="scientific">Staphylococcus aureus (strain JH9)</name>
    <dbReference type="NCBI Taxonomy" id="359786"/>
    <lineage>
        <taxon>Bacteria</taxon>
        <taxon>Bacillati</taxon>
        <taxon>Bacillota</taxon>
        <taxon>Bacilli</taxon>
        <taxon>Bacillales</taxon>
        <taxon>Staphylococcaceae</taxon>
        <taxon>Staphylococcus</taxon>
    </lineage>
</organism>
<proteinExistence type="inferred from homology"/>
<gene>
    <name evidence="1" type="primary">acpP</name>
    <name type="ordered locus">SaurJH9_1291</name>
</gene>
<dbReference type="EMBL" id="CP000703">
    <property type="protein sequence ID" value="ABQ49090.1"/>
    <property type="molecule type" value="Genomic_DNA"/>
</dbReference>
<dbReference type="RefSeq" id="WP_000426914.1">
    <property type="nucleotide sequence ID" value="NC_009487.1"/>
</dbReference>
<dbReference type="SMR" id="A5ISB7"/>
<dbReference type="KEGG" id="saj:SaurJH9_1291"/>
<dbReference type="HOGENOM" id="CLU_108696_5_1_9"/>
<dbReference type="UniPathway" id="UPA00094"/>
<dbReference type="GO" id="GO:0005829">
    <property type="term" value="C:cytosol"/>
    <property type="evidence" value="ECO:0007669"/>
    <property type="project" value="TreeGrafter"/>
</dbReference>
<dbReference type="GO" id="GO:0016020">
    <property type="term" value="C:membrane"/>
    <property type="evidence" value="ECO:0007669"/>
    <property type="project" value="GOC"/>
</dbReference>
<dbReference type="GO" id="GO:0000035">
    <property type="term" value="F:acyl binding"/>
    <property type="evidence" value="ECO:0007669"/>
    <property type="project" value="TreeGrafter"/>
</dbReference>
<dbReference type="GO" id="GO:0000036">
    <property type="term" value="F:acyl carrier activity"/>
    <property type="evidence" value="ECO:0007669"/>
    <property type="project" value="UniProtKB-UniRule"/>
</dbReference>
<dbReference type="GO" id="GO:0009245">
    <property type="term" value="P:lipid A biosynthetic process"/>
    <property type="evidence" value="ECO:0007669"/>
    <property type="project" value="TreeGrafter"/>
</dbReference>
<dbReference type="FunFam" id="1.10.1200.10:FF:000001">
    <property type="entry name" value="Acyl carrier protein"/>
    <property type="match status" value="1"/>
</dbReference>
<dbReference type="Gene3D" id="1.10.1200.10">
    <property type="entry name" value="ACP-like"/>
    <property type="match status" value="1"/>
</dbReference>
<dbReference type="HAMAP" id="MF_01217">
    <property type="entry name" value="Acyl_carrier"/>
    <property type="match status" value="1"/>
</dbReference>
<dbReference type="InterPro" id="IPR003231">
    <property type="entry name" value="ACP"/>
</dbReference>
<dbReference type="InterPro" id="IPR036736">
    <property type="entry name" value="ACP-like_sf"/>
</dbReference>
<dbReference type="InterPro" id="IPR009081">
    <property type="entry name" value="PP-bd_ACP"/>
</dbReference>
<dbReference type="InterPro" id="IPR006162">
    <property type="entry name" value="Ppantetheine_attach_site"/>
</dbReference>
<dbReference type="NCBIfam" id="TIGR00517">
    <property type="entry name" value="acyl_carrier"/>
    <property type="match status" value="1"/>
</dbReference>
<dbReference type="NCBIfam" id="NF002148">
    <property type="entry name" value="PRK00982.1-2"/>
    <property type="match status" value="1"/>
</dbReference>
<dbReference type="NCBIfam" id="NF002150">
    <property type="entry name" value="PRK00982.1-4"/>
    <property type="match status" value="1"/>
</dbReference>
<dbReference type="NCBIfam" id="NF002151">
    <property type="entry name" value="PRK00982.1-5"/>
    <property type="match status" value="1"/>
</dbReference>
<dbReference type="PANTHER" id="PTHR20863">
    <property type="entry name" value="ACYL CARRIER PROTEIN"/>
    <property type="match status" value="1"/>
</dbReference>
<dbReference type="PANTHER" id="PTHR20863:SF76">
    <property type="entry name" value="CARRIER DOMAIN-CONTAINING PROTEIN"/>
    <property type="match status" value="1"/>
</dbReference>
<dbReference type="Pfam" id="PF00550">
    <property type="entry name" value="PP-binding"/>
    <property type="match status" value="1"/>
</dbReference>
<dbReference type="SUPFAM" id="SSF47336">
    <property type="entry name" value="ACP-like"/>
    <property type="match status" value="1"/>
</dbReference>
<dbReference type="PROSITE" id="PS50075">
    <property type="entry name" value="CARRIER"/>
    <property type="match status" value="1"/>
</dbReference>
<dbReference type="PROSITE" id="PS00012">
    <property type="entry name" value="PHOSPHOPANTETHEINE"/>
    <property type="match status" value="1"/>
</dbReference>